<dbReference type="EC" id="2.2.1.7" evidence="1"/>
<dbReference type="EMBL" id="CP000241">
    <property type="protein sequence ID" value="ABF84416.1"/>
    <property type="molecule type" value="Genomic_DNA"/>
</dbReference>
<dbReference type="SMR" id="Q1CUF6"/>
<dbReference type="KEGG" id="hpa:HPAG1_0349"/>
<dbReference type="HOGENOM" id="CLU_009227_1_4_7"/>
<dbReference type="UniPathway" id="UPA00064">
    <property type="reaction ID" value="UER00091"/>
</dbReference>
<dbReference type="GO" id="GO:0005829">
    <property type="term" value="C:cytosol"/>
    <property type="evidence" value="ECO:0007669"/>
    <property type="project" value="TreeGrafter"/>
</dbReference>
<dbReference type="GO" id="GO:0008661">
    <property type="term" value="F:1-deoxy-D-xylulose-5-phosphate synthase activity"/>
    <property type="evidence" value="ECO:0007669"/>
    <property type="project" value="UniProtKB-UniRule"/>
</dbReference>
<dbReference type="GO" id="GO:0000287">
    <property type="term" value="F:magnesium ion binding"/>
    <property type="evidence" value="ECO:0007669"/>
    <property type="project" value="UniProtKB-UniRule"/>
</dbReference>
<dbReference type="GO" id="GO:0030976">
    <property type="term" value="F:thiamine pyrophosphate binding"/>
    <property type="evidence" value="ECO:0007669"/>
    <property type="project" value="UniProtKB-UniRule"/>
</dbReference>
<dbReference type="GO" id="GO:0052865">
    <property type="term" value="P:1-deoxy-D-xylulose 5-phosphate biosynthetic process"/>
    <property type="evidence" value="ECO:0007669"/>
    <property type="project" value="UniProtKB-UniPathway"/>
</dbReference>
<dbReference type="GO" id="GO:0019288">
    <property type="term" value="P:isopentenyl diphosphate biosynthetic process, methylerythritol 4-phosphate pathway"/>
    <property type="evidence" value="ECO:0007669"/>
    <property type="project" value="TreeGrafter"/>
</dbReference>
<dbReference type="GO" id="GO:0016114">
    <property type="term" value="P:terpenoid biosynthetic process"/>
    <property type="evidence" value="ECO:0007669"/>
    <property type="project" value="UniProtKB-UniRule"/>
</dbReference>
<dbReference type="GO" id="GO:0009228">
    <property type="term" value="P:thiamine biosynthetic process"/>
    <property type="evidence" value="ECO:0007669"/>
    <property type="project" value="UniProtKB-UniRule"/>
</dbReference>
<dbReference type="CDD" id="cd02007">
    <property type="entry name" value="TPP_DXS"/>
    <property type="match status" value="1"/>
</dbReference>
<dbReference type="CDD" id="cd07033">
    <property type="entry name" value="TPP_PYR_DXS_TK_like"/>
    <property type="match status" value="1"/>
</dbReference>
<dbReference type="FunFam" id="3.40.50.970:FF:000005">
    <property type="entry name" value="1-deoxy-D-xylulose-5-phosphate synthase"/>
    <property type="match status" value="1"/>
</dbReference>
<dbReference type="Gene3D" id="3.40.50.920">
    <property type="match status" value="1"/>
</dbReference>
<dbReference type="Gene3D" id="3.40.50.970">
    <property type="match status" value="2"/>
</dbReference>
<dbReference type="HAMAP" id="MF_00315">
    <property type="entry name" value="DXP_synth"/>
    <property type="match status" value="1"/>
</dbReference>
<dbReference type="InterPro" id="IPR005477">
    <property type="entry name" value="Dxylulose-5-P_synthase"/>
</dbReference>
<dbReference type="InterPro" id="IPR029061">
    <property type="entry name" value="THDP-binding"/>
</dbReference>
<dbReference type="InterPro" id="IPR009014">
    <property type="entry name" value="Transketo_C/PFOR_II"/>
</dbReference>
<dbReference type="InterPro" id="IPR005475">
    <property type="entry name" value="Transketolase-like_Pyr-bd"/>
</dbReference>
<dbReference type="InterPro" id="IPR020826">
    <property type="entry name" value="Transketolase_BS"/>
</dbReference>
<dbReference type="InterPro" id="IPR033248">
    <property type="entry name" value="Transketolase_C"/>
</dbReference>
<dbReference type="InterPro" id="IPR049557">
    <property type="entry name" value="Transketolase_CS"/>
</dbReference>
<dbReference type="NCBIfam" id="TIGR00204">
    <property type="entry name" value="dxs"/>
    <property type="match status" value="1"/>
</dbReference>
<dbReference type="NCBIfam" id="NF003933">
    <property type="entry name" value="PRK05444.2-2"/>
    <property type="match status" value="1"/>
</dbReference>
<dbReference type="PANTHER" id="PTHR43322">
    <property type="entry name" value="1-D-DEOXYXYLULOSE 5-PHOSPHATE SYNTHASE-RELATED"/>
    <property type="match status" value="1"/>
</dbReference>
<dbReference type="PANTHER" id="PTHR43322:SF5">
    <property type="entry name" value="1-DEOXY-D-XYLULOSE-5-PHOSPHATE SYNTHASE, CHLOROPLASTIC"/>
    <property type="match status" value="1"/>
</dbReference>
<dbReference type="Pfam" id="PF13292">
    <property type="entry name" value="DXP_synthase_N"/>
    <property type="match status" value="1"/>
</dbReference>
<dbReference type="Pfam" id="PF02779">
    <property type="entry name" value="Transket_pyr"/>
    <property type="match status" value="1"/>
</dbReference>
<dbReference type="Pfam" id="PF02780">
    <property type="entry name" value="Transketolase_C"/>
    <property type="match status" value="1"/>
</dbReference>
<dbReference type="SMART" id="SM00861">
    <property type="entry name" value="Transket_pyr"/>
    <property type="match status" value="1"/>
</dbReference>
<dbReference type="SUPFAM" id="SSF52518">
    <property type="entry name" value="Thiamin diphosphate-binding fold (THDP-binding)"/>
    <property type="match status" value="2"/>
</dbReference>
<dbReference type="SUPFAM" id="SSF52922">
    <property type="entry name" value="TK C-terminal domain-like"/>
    <property type="match status" value="1"/>
</dbReference>
<dbReference type="PROSITE" id="PS00801">
    <property type="entry name" value="TRANSKETOLASE_1"/>
    <property type="match status" value="1"/>
</dbReference>
<dbReference type="PROSITE" id="PS00802">
    <property type="entry name" value="TRANSKETOLASE_2"/>
    <property type="match status" value="1"/>
</dbReference>
<reference key="1">
    <citation type="journal article" date="2006" name="Proc. Natl. Acad. Sci. U.S.A.">
        <title>The complete genome sequence of a chronic atrophic gastritis Helicobacter pylori strain: evolution during disease progression.</title>
        <authorList>
            <person name="Oh J.D."/>
            <person name="Kling-Baeckhed H."/>
            <person name="Giannakis M."/>
            <person name="Xu J."/>
            <person name="Fulton R.S."/>
            <person name="Fulton L.A."/>
            <person name="Cordum H.S."/>
            <person name="Wang C."/>
            <person name="Elliott G."/>
            <person name="Edwards J."/>
            <person name="Mardis E.R."/>
            <person name="Engstrand L.G."/>
            <person name="Gordon J.I."/>
        </authorList>
    </citation>
    <scope>NUCLEOTIDE SEQUENCE [LARGE SCALE GENOMIC DNA]</scope>
    <source>
        <strain>HPAG1</strain>
    </source>
</reference>
<accession>Q1CUF6</accession>
<comment type="function">
    <text evidence="1">Catalyzes the acyloin condensation reaction between C atoms 2 and 3 of pyruvate and glyceraldehyde 3-phosphate to yield 1-deoxy-D-xylulose-5-phosphate (DXP).</text>
</comment>
<comment type="catalytic activity">
    <reaction evidence="1">
        <text>D-glyceraldehyde 3-phosphate + pyruvate + H(+) = 1-deoxy-D-xylulose 5-phosphate + CO2</text>
        <dbReference type="Rhea" id="RHEA:12605"/>
        <dbReference type="ChEBI" id="CHEBI:15361"/>
        <dbReference type="ChEBI" id="CHEBI:15378"/>
        <dbReference type="ChEBI" id="CHEBI:16526"/>
        <dbReference type="ChEBI" id="CHEBI:57792"/>
        <dbReference type="ChEBI" id="CHEBI:59776"/>
        <dbReference type="EC" id="2.2.1.7"/>
    </reaction>
</comment>
<comment type="cofactor">
    <cofactor evidence="1">
        <name>Mg(2+)</name>
        <dbReference type="ChEBI" id="CHEBI:18420"/>
    </cofactor>
    <text evidence="1">Binds 1 Mg(2+) ion per subunit.</text>
</comment>
<comment type="cofactor">
    <cofactor evidence="1">
        <name>thiamine diphosphate</name>
        <dbReference type="ChEBI" id="CHEBI:58937"/>
    </cofactor>
    <text evidence="1">Binds 1 thiamine pyrophosphate per subunit.</text>
</comment>
<comment type="pathway">
    <text evidence="1">Metabolic intermediate biosynthesis; 1-deoxy-D-xylulose 5-phosphate biosynthesis; 1-deoxy-D-xylulose 5-phosphate from D-glyceraldehyde 3-phosphate and pyruvate: step 1/1.</text>
</comment>
<comment type="subunit">
    <text evidence="1">Homodimer.</text>
</comment>
<comment type="similarity">
    <text evidence="1">Belongs to the transketolase family. DXPS subfamily.</text>
</comment>
<sequence>MILQNKTFDLNPNDIAGLELVCQTLRERILEVVSANGGHLSSSLGAVELIVGMHALFDCQKNPFIFDTSHQAYAHKLLTGRFESFSTLRQFKGLSGFTKPSESAYDYFIAGHSSTSVSIGVGVAKAFCLKQALGMPIALLGDGSISAGIFYEALNELGDRKYPMIMILNDNEMSISTPIGALSKALSQLMKGPFYQSFRSKVKKILSTLPESVNYLASRFEESFKLITPGVFFEELGINYIGPINGHDLSAIIETLKLAKELKEPVLIHAQTLKGKGYKIAEGRYEKWHGVGPFDLDTGLSKKSKSTILSPTEAYSNTLLELAKKDEKIVGVTAAMPSGTGLDKLIDAYPLRFFDVAIAEQHALTSSSAMAKEGFKPFVSIYSTFLQRAYDSIVHDACISSLPIKLAIDRAGIVGEDGETHQGLLDVSYLRSIPNMVIFAPRDNETLKNAVRFANEHDSSPCAFRYPRGSFALKEGVFEPSGFVLGRSELLKKEGEILLIGYGNGVGRAHLVQLALKEKNIECALLDLRFLKPLDPNLSAIIAPYQKLYVFSDNYKLGGVASAILEFLSEQNILKPVKSFEIMDEFIMHGNTALVEKSLGLDTESLTDAILKDLGQER</sequence>
<gene>
    <name evidence="1" type="primary">dxs</name>
    <name type="ordered locus">HPAG1_0349</name>
</gene>
<feature type="chain" id="PRO_0000256429" description="1-deoxy-D-xylulose-5-phosphate synthase">
    <location>
        <begin position="1"/>
        <end position="618"/>
    </location>
</feature>
<feature type="binding site" evidence="1">
    <location>
        <position position="70"/>
    </location>
    <ligand>
        <name>thiamine diphosphate</name>
        <dbReference type="ChEBI" id="CHEBI:58937"/>
    </ligand>
</feature>
<feature type="binding site" evidence="1">
    <location>
        <begin position="111"/>
        <end position="113"/>
    </location>
    <ligand>
        <name>thiamine diphosphate</name>
        <dbReference type="ChEBI" id="CHEBI:58937"/>
    </ligand>
</feature>
<feature type="binding site" evidence="1">
    <location>
        <position position="142"/>
    </location>
    <ligand>
        <name>Mg(2+)</name>
        <dbReference type="ChEBI" id="CHEBI:18420"/>
    </ligand>
</feature>
<feature type="binding site" evidence="1">
    <location>
        <begin position="143"/>
        <end position="144"/>
    </location>
    <ligand>
        <name>thiamine diphosphate</name>
        <dbReference type="ChEBI" id="CHEBI:58937"/>
    </ligand>
</feature>
<feature type="binding site" evidence="1">
    <location>
        <position position="171"/>
    </location>
    <ligand>
        <name>Mg(2+)</name>
        <dbReference type="ChEBI" id="CHEBI:18420"/>
    </ligand>
</feature>
<feature type="binding site" evidence="1">
    <location>
        <position position="171"/>
    </location>
    <ligand>
        <name>thiamine diphosphate</name>
        <dbReference type="ChEBI" id="CHEBI:58937"/>
    </ligand>
</feature>
<feature type="binding site" evidence="1">
    <location>
        <position position="278"/>
    </location>
    <ligand>
        <name>thiamine diphosphate</name>
        <dbReference type="ChEBI" id="CHEBI:58937"/>
    </ligand>
</feature>
<feature type="binding site" evidence="1">
    <location>
        <position position="360"/>
    </location>
    <ligand>
        <name>thiamine diphosphate</name>
        <dbReference type="ChEBI" id="CHEBI:58937"/>
    </ligand>
</feature>
<organism>
    <name type="scientific">Helicobacter pylori (strain HPAG1)</name>
    <dbReference type="NCBI Taxonomy" id="357544"/>
    <lineage>
        <taxon>Bacteria</taxon>
        <taxon>Pseudomonadati</taxon>
        <taxon>Campylobacterota</taxon>
        <taxon>Epsilonproteobacteria</taxon>
        <taxon>Campylobacterales</taxon>
        <taxon>Helicobacteraceae</taxon>
        <taxon>Helicobacter</taxon>
    </lineage>
</organism>
<name>DXS_HELPH</name>
<proteinExistence type="inferred from homology"/>
<keyword id="KW-0414">Isoprene biosynthesis</keyword>
<keyword id="KW-0460">Magnesium</keyword>
<keyword id="KW-0479">Metal-binding</keyword>
<keyword id="KW-0784">Thiamine biosynthesis</keyword>
<keyword id="KW-0786">Thiamine pyrophosphate</keyword>
<keyword id="KW-0808">Transferase</keyword>
<protein>
    <recommendedName>
        <fullName evidence="1">1-deoxy-D-xylulose-5-phosphate synthase</fullName>
        <ecNumber evidence="1">2.2.1.7</ecNumber>
    </recommendedName>
    <alternativeName>
        <fullName evidence="1">1-deoxyxylulose-5-phosphate synthase</fullName>
        <shortName evidence="1">DXP synthase</shortName>
        <shortName evidence="1">DXPS</shortName>
    </alternativeName>
</protein>
<evidence type="ECO:0000255" key="1">
    <source>
        <dbReference type="HAMAP-Rule" id="MF_00315"/>
    </source>
</evidence>